<feature type="chain" id="PRO_0000184060" description="Endoglucanase CX">
    <location>
        <begin position="1" status="less than"/>
        <end position="251" status="greater than"/>
    </location>
</feature>
<feature type="non-terminal residue">
    <location>
        <position position="1"/>
    </location>
</feature>
<feature type="non-terminal residue">
    <location>
        <position position="251"/>
    </location>
</feature>
<dbReference type="EC" id="3.2.1.4"/>
<dbReference type="EMBL" id="Z23119">
    <property type="protein sequence ID" value="CAA80665.1"/>
    <property type="molecule type" value="mRNA"/>
</dbReference>
<dbReference type="PIR" id="S39202">
    <property type="entry name" value="S39202"/>
</dbReference>
<dbReference type="SMR" id="P38534"/>
<dbReference type="CAZy" id="GH9">
    <property type="family name" value="Glycoside Hydrolase Family 9"/>
</dbReference>
<dbReference type="eggNOG" id="ENOG502QPI6">
    <property type="taxonomic scope" value="Eukaryota"/>
</dbReference>
<dbReference type="GO" id="GO:0008810">
    <property type="term" value="F:cellulase activity"/>
    <property type="evidence" value="ECO:0007669"/>
    <property type="project" value="UniProtKB-EC"/>
</dbReference>
<dbReference type="GO" id="GO:0030245">
    <property type="term" value="P:cellulose catabolic process"/>
    <property type="evidence" value="ECO:0007669"/>
    <property type="project" value="UniProtKB-KW"/>
</dbReference>
<dbReference type="Gene3D" id="1.50.10.10">
    <property type="match status" value="1"/>
</dbReference>
<dbReference type="InterPro" id="IPR008928">
    <property type="entry name" value="6-hairpin_glycosidase_sf"/>
</dbReference>
<dbReference type="InterPro" id="IPR012341">
    <property type="entry name" value="6hp_glycosidase-like_sf"/>
</dbReference>
<dbReference type="InterPro" id="IPR001701">
    <property type="entry name" value="Glyco_hydro_9"/>
</dbReference>
<dbReference type="PANTHER" id="PTHR22298">
    <property type="entry name" value="ENDO-1,4-BETA-GLUCANASE"/>
    <property type="match status" value="1"/>
</dbReference>
<dbReference type="Pfam" id="PF00759">
    <property type="entry name" value="Glyco_hydro_9"/>
    <property type="match status" value="1"/>
</dbReference>
<dbReference type="SUPFAM" id="SSF48208">
    <property type="entry name" value="Six-hairpin glycosidases"/>
    <property type="match status" value="1"/>
</dbReference>
<sequence length="251" mass="27476">PEDMDTPRNVYKVSTQNPGSDVAAETAAALAAASIVFKDSDPSYSGKLLHTAMKVFDFADRYRGSYSDSIGSVVCPFYCSYSGHHDELLWGASWIHRASQNRSYLVYIKSNGHILGEDDDGFSASWDDKETGTKVLLVSKSFLERHVEEFQLYKAHSGNYICSLLPGTSNFQGQYTPGGLLYKASESNLQYVTSTTLLLLTYAKYLRTNGGVATCGSSKVTAETLISEAKKQVDYILGNNPAKISYMVGFG</sequence>
<protein>
    <recommendedName>
        <fullName>Endoglucanase CX</fullName>
        <ecNumber>3.2.1.4</ecNumber>
    </recommendedName>
    <alternativeName>
        <fullName>CX-cellulase</fullName>
    </alternativeName>
    <alternativeName>
        <fullName>Endo-1,4-beta-glucanase</fullName>
    </alternativeName>
</protein>
<evidence type="ECO:0000305" key="1"/>
<keyword id="KW-0119">Carbohydrate metabolism</keyword>
<keyword id="KW-0136">Cellulose degradation</keyword>
<keyword id="KW-0326">Glycosidase</keyword>
<keyword id="KW-0378">Hydrolase</keyword>
<keyword id="KW-0624">Polysaccharide degradation</keyword>
<reference key="1">
    <citation type="submission" date="1993-06" db="EMBL/GenBank/DDBJ databases">
        <authorList>
            <person name="Bonghi C."/>
            <person name="Tonutti P."/>
            <person name="Ramina A."/>
        </authorList>
    </citation>
    <scope>NUCLEOTIDE SEQUENCE [MRNA]</scope>
    <source>
        <strain>cv. Redhaven</strain>
        <tissue>Abscission zone</tissue>
    </source>
</reference>
<proteinExistence type="evidence at transcript level"/>
<name>GUNX_PRUPE</name>
<organism>
    <name type="scientific">Prunus persica</name>
    <name type="common">Peach</name>
    <name type="synonym">Amygdalus persica</name>
    <dbReference type="NCBI Taxonomy" id="3760"/>
    <lineage>
        <taxon>Eukaryota</taxon>
        <taxon>Viridiplantae</taxon>
        <taxon>Streptophyta</taxon>
        <taxon>Embryophyta</taxon>
        <taxon>Tracheophyta</taxon>
        <taxon>Spermatophyta</taxon>
        <taxon>Magnoliopsida</taxon>
        <taxon>eudicotyledons</taxon>
        <taxon>Gunneridae</taxon>
        <taxon>Pentapetalae</taxon>
        <taxon>rosids</taxon>
        <taxon>fabids</taxon>
        <taxon>Rosales</taxon>
        <taxon>Rosaceae</taxon>
        <taxon>Amygdaloideae</taxon>
        <taxon>Amygdaleae</taxon>
        <taxon>Prunus</taxon>
    </lineage>
</organism>
<comment type="function">
    <text>Degrades carboxymethylcellulose (CMC).</text>
</comment>
<comment type="catalytic activity">
    <reaction>
        <text>Endohydrolysis of (1-&gt;4)-beta-D-glucosidic linkages in cellulose, lichenin and cereal beta-D-glucans.</text>
        <dbReference type="EC" id="3.2.1.4"/>
    </reaction>
</comment>
<comment type="similarity">
    <text evidence="1">Belongs to the glycosyl hydrolase 9 (cellulase E) family.</text>
</comment>
<accession>P38534</accession>